<feature type="chain" id="PRO_0000116830" description="Uncharacterized protein C1786.04">
    <location>
        <begin position="1"/>
        <end position="111"/>
    </location>
</feature>
<name>YKO4_SCHPO</name>
<accession>Q9C116</accession>
<keyword id="KW-1185">Reference proteome</keyword>
<sequence>MTRRFKVKMNQPRFYFLSLQSYVLVNWQYAICDSQDSNYKQVGGLACIYMRETLFGIHNLSVASPFMIGSLQPLVPWLIRQKWHKIDEPRQLPSTHHALPEGRWRSLTVSL</sequence>
<proteinExistence type="predicted"/>
<reference key="1">
    <citation type="journal article" date="2002" name="Nature">
        <title>The genome sequence of Schizosaccharomyces pombe.</title>
        <authorList>
            <person name="Wood V."/>
            <person name="Gwilliam R."/>
            <person name="Rajandream M.A."/>
            <person name="Lyne M.H."/>
            <person name="Lyne R."/>
            <person name="Stewart A."/>
            <person name="Sgouros J.G."/>
            <person name="Peat N."/>
            <person name="Hayles J."/>
            <person name="Baker S.G."/>
            <person name="Basham D."/>
            <person name="Bowman S."/>
            <person name="Brooks K."/>
            <person name="Brown D."/>
            <person name="Brown S."/>
            <person name="Chillingworth T."/>
            <person name="Churcher C.M."/>
            <person name="Collins M."/>
            <person name="Connor R."/>
            <person name="Cronin A."/>
            <person name="Davis P."/>
            <person name="Feltwell T."/>
            <person name="Fraser A."/>
            <person name="Gentles S."/>
            <person name="Goble A."/>
            <person name="Hamlin N."/>
            <person name="Harris D.E."/>
            <person name="Hidalgo J."/>
            <person name="Hodgson G."/>
            <person name="Holroyd S."/>
            <person name="Hornsby T."/>
            <person name="Howarth S."/>
            <person name="Huckle E.J."/>
            <person name="Hunt S."/>
            <person name="Jagels K."/>
            <person name="James K.D."/>
            <person name="Jones L."/>
            <person name="Jones M."/>
            <person name="Leather S."/>
            <person name="McDonald S."/>
            <person name="McLean J."/>
            <person name="Mooney P."/>
            <person name="Moule S."/>
            <person name="Mungall K.L."/>
            <person name="Murphy L.D."/>
            <person name="Niblett D."/>
            <person name="Odell C."/>
            <person name="Oliver K."/>
            <person name="O'Neil S."/>
            <person name="Pearson D."/>
            <person name="Quail M.A."/>
            <person name="Rabbinowitsch E."/>
            <person name="Rutherford K.M."/>
            <person name="Rutter S."/>
            <person name="Saunders D."/>
            <person name="Seeger K."/>
            <person name="Sharp S."/>
            <person name="Skelton J."/>
            <person name="Simmonds M.N."/>
            <person name="Squares R."/>
            <person name="Squares S."/>
            <person name="Stevens K."/>
            <person name="Taylor K."/>
            <person name="Taylor R.G."/>
            <person name="Tivey A."/>
            <person name="Walsh S.V."/>
            <person name="Warren T."/>
            <person name="Whitehead S."/>
            <person name="Woodward J.R."/>
            <person name="Volckaert G."/>
            <person name="Aert R."/>
            <person name="Robben J."/>
            <person name="Grymonprez B."/>
            <person name="Weltjens I."/>
            <person name="Vanstreels E."/>
            <person name="Rieger M."/>
            <person name="Schaefer M."/>
            <person name="Mueller-Auer S."/>
            <person name="Gabel C."/>
            <person name="Fuchs M."/>
            <person name="Duesterhoeft A."/>
            <person name="Fritzc C."/>
            <person name="Holzer E."/>
            <person name="Moestl D."/>
            <person name="Hilbert H."/>
            <person name="Borzym K."/>
            <person name="Langer I."/>
            <person name="Beck A."/>
            <person name="Lehrach H."/>
            <person name="Reinhardt R."/>
            <person name="Pohl T.M."/>
            <person name="Eger P."/>
            <person name="Zimmermann W."/>
            <person name="Wedler H."/>
            <person name="Wambutt R."/>
            <person name="Purnelle B."/>
            <person name="Goffeau A."/>
            <person name="Cadieu E."/>
            <person name="Dreano S."/>
            <person name="Gloux S."/>
            <person name="Lelaure V."/>
            <person name="Mottier S."/>
            <person name="Galibert F."/>
            <person name="Aves S.J."/>
            <person name="Xiang Z."/>
            <person name="Hunt C."/>
            <person name="Moore K."/>
            <person name="Hurst S.M."/>
            <person name="Lucas M."/>
            <person name="Rochet M."/>
            <person name="Gaillardin C."/>
            <person name="Tallada V.A."/>
            <person name="Garzon A."/>
            <person name="Thode G."/>
            <person name="Daga R.R."/>
            <person name="Cruzado L."/>
            <person name="Jimenez J."/>
            <person name="Sanchez M."/>
            <person name="del Rey F."/>
            <person name="Benito J."/>
            <person name="Dominguez A."/>
            <person name="Revuelta J.L."/>
            <person name="Moreno S."/>
            <person name="Armstrong J."/>
            <person name="Forsburg S.L."/>
            <person name="Cerutti L."/>
            <person name="Lowe T."/>
            <person name="McCombie W.R."/>
            <person name="Paulsen I."/>
            <person name="Potashkin J."/>
            <person name="Shpakovski G.V."/>
            <person name="Ussery D."/>
            <person name="Barrell B.G."/>
            <person name="Nurse P."/>
        </authorList>
    </citation>
    <scope>NUCLEOTIDE SEQUENCE [LARGE SCALE GENOMIC DNA]</scope>
    <source>
        <strain>972 / ATCC 24843</strain>
    </source>
</reference>
<dbReference type="EMBL" id="CU329670">
    <property type="protein sequence ID" value="CAC34406.1"/>
    <property type="molecule type" value="Genomic_DNA"/>
</dbReference>
<dbReference type="RefSeq" id="NP_594023.1">
    <property type="nucleotide sequence ID" value="NM_001019448.2"/>
</dbReference>
<dbReference type="BioGRID" id="278912">
    <property type="interactions" value="2"/>
</dbReference>
<dbReference type="PaxDb" id="4896-SPAC1786.04.1"/>
<dbReference type="EnsemblFungi" id="SPAC1786.04.1">
    <property type="protein sequence ID" value="SPAC1786.04.1:pep"/>
    <property type="gene ID" value="SPAC1786.04"/>
</dbReference>
<dbReference type="KEGG" id="spo:2542451"/>
<dbReference type="PomBase" id="SPAC1786.04"/>
<dbReference type="VEuPathDB" id="FungiDB:SPAC1786.04"/>
<dbReference type="HOGENOM" id="CLU_2159871_0_0_1"/>
<dbReference type="InParanoid" id="Q9C116"/>
<dbReference type="PRO" id="PR:Q9C116"/>
<dbReference type="Proteomes" id="UP000002485">
    <property type="component" value="Chromosome I"/>
</dbReference>
<dbReference type="GO" id="GO:0005739">
    <property type="term" value="C:mitochondrion"/>
    <property type="evidence" value="ECO:0007005"/>
    <property type="project" value="PomBase"/>
</dbReference>
<organism>
    <name type="scientific">Schizosaccharomyces pombe (strain 972 / ATCC 24843)</name>
    <name type="common">Fission yeast</name>
    <dbReference type="NCBI Taxonomy" id="284812"/>
    <lineage>
        <taxon>Eukaryota</taxon>
        <taxon>Fungi</taxon>
        <taxon>Dikarya</taxon>
        <taxon>Ascomycota</taxon>
        <taxon>Taphrinomycotina</taxon>
        <taxon>Schizosaccharomycetes</taxon>
        <taxon>Schizosaccharomycetales</taxon>
        <taxon>Schizosaccharomycetaceae</taxon>
        <taxon>Schizosaccharomyces</taxon>
    </lineage>
</organism>
<protein>
    <recommendedName>
        <fullName>Uncharacterized protein C1786.04</fullName>
    </recommendedName>
</protein>
<gene>
    <name type="ORF">SPAC1786.04</name>
</gene>